<comment type="function">
    <text evidence="1">Glutaredoxin necessary for virion morphogenesis and virus replication. Functions as a thiol-disulfide transfer protein between membrane-associated OPG128 and substrates OPG095 or OPG053. The complete pathway for formation of disulfide bonds in intracellular virion membrane proteins sequentially involves oxidation of OPG072, OPG128 and OPG088. Exhibit thioltransferase and dehydroascorbate reductase activities in vitro.</text>
</comment>
<comment type="subunit">
    <text evidence="1">Homodimer.</text>
</comment>
<comment type="subcellular location">
    <subcellularLocation>
        <location evidence="1">Host cytoplasm</location>
    </subcellularLocation>
</comment>
<comment type="induction">
    <text evidence="1">Expressed in the intermediate phase of the viral replicative cycle.</text>
</comment>
<comment type="similarity">
    <text evidence="2">Belongs to the glutaredoxin family.</text>
</comment>
<evidence type="ECO:0000250" key="1">
    <source>
        <dbReference type="UniProtKB" id="P68460"/>
    </source>
</evidence>
<evidence type="ECO:0000305" key="2"/>
<feature type="chain" id="PRO_0000448227" description="Glutaredoxin-2">
    <location>
        <begin position="1"/>
        <end position="124"/>
    </location>
</feature>
<feature type="disulfide bond" description="Redox-active" evidence="1">
    <location>
        <begin position="13"/>
        <end position="16"/>
    </location>
</feature>
<sequence length="124" mass="14014">MKNVLIIFGKPYCSICENVSEAVEELKSEYDILHVDILSFFLKDGDSSMLGDVKRGTLIGNFAAHLSNYIVSIFKYNPQTKQMAFVDINKSLDFTKTDKSLVNLEILKSEIEKANYGVWPPVTE</sequence>
<organismHost>
    <name type="scientific">Homo sapiens</name>
    <name type="common">Human</name>
    <dbReference type="NCBI Taxonomy" id="9606"/>
</organismHost>
<keyword id="KW-1015">Disulfide bond</keyword>
<keyword id="KW-0249">Electron transport</keyword>
<keyword id="KW-1035">Host cytoplasm</keyword>
<keyword id="KW-0676">Redox-active center</keyword>
<keyword id="KW-0813">Transport</keyword>
<organism>
    <name type="scientific">Variola virus</name>
    <dbReference type="NCBI Taxonomy" id="10255"/>
    <lineage>
        <taxon>Viruses</taxon>
        <taxon>Varidnaviria</taxon>
        <taxon>Bamfordvirae</taxon>
        <taxon>Nucleocytoviricota</taxon>
        <taxon>Pokkesviricetes</taxon>
        <taxon>Chitovirales</taxon>
        <taxon>Poxviridae</taxon>
        <taxon>Chordopoxvirinae</taxon>
        <taxon>Orthopoxvirus</taxon>
    </lineage>
</organism>
<gene>
    <name type="primary">OPG088</name>
    <name type="ORF">G4L</name>
</gene>
<proteinExistence type="inferred from homology"/>
<accession>P0DSY4</accession>
<accession>P32994</accession>
<accession>Q76Q24</accession>
<reference key="1">
    <citation type="journal article" date="1993" name="Nature">
        <title>Potential virulence determinants in terminal regions of variola smallpox virus genome.</title>
        <authorList>
            <person name="Massung R.F."/>
            <person name="Esposito J.J."/>
            <person name="Liu L.I."/>
            <person name="Qi J."/>
            <person name="Utterback T.R."/>
            <person name="Knight J.C."/>
            <person name="Aubin L."/>
            <person name="Yuran T.E."/>
            <person name="Parsons J.M."/>
            <person name="Loparev V.N."/>
            <person name="Selivanov N.A."/>
            <person name="Cavallaro K.F."/>
            <person name="Kerlavage A.R."/>
            <person name="Mahy B.W.J."/>
            <person name="Venter J.C."/>
        </authorList>
    </citation>
    <scope>NUCLEOTIDE SEQUENCE [GENOMIC DNA]</scope>
    <source>
        <strain>Bangladesh-1975</strain>
    </source>
</reference>
<reference key="2">
    <citation type="submission" date="1995-12" db="EMBL/GenBank/DDBJ databases">
        <authorList>
            <person name="Shchelkunov S.N."/>
            <person name="Sosnovtsev S.V."/>
            <person name="Totmenin A.V."/>
            <person name="Resenchuk S.M."/>
            <person name="Blinov V.M."/>
            <person name="Sandakhchiev L.S."/>
        </authorList>
    </citation>
    <scope>NUCLEOTIDE SEQUENCE [GENOMIC DNA]</scope>
    <source>
        <strain>Garcia-1966</strain>
    </source>
</reference>
<reference key="3">
    <citation type="journal article" date="2000" name="Virology">
        <title>Alastrim smallpox variola minor virus genome DNA sequences.</title>
        <authorList>
            <person name="Shchelkunov S.N."/>
            <person name="Totmenin A.V."/>
            <person name="Loparev V.N."/>
            <person name="Safronov P.F."/>
            <person name="Gutorov V.V."/>
            <person name="Chizhikov V.E."/>
            <person name="Knight J.C."/>
            <person name="Parsons J.M."/>
            <person name="Massung R.F."/>
            <person name="Esposito J.J."/>
        </authorList>
    </citation>
    <scope>NUCLEOTIDE SEQUENCE [LARGE SCALE GENOMIC DNA]</scope>
    <source>
        <strain>Garcia-1966</strain>
    </source>
</reference>
<dbReference type="EMBL" id="L22579">
    <property type="protein sequence ID" value="AAA60814.1"/>
    <property type="molecule type" value="Genomic_DNA"/>
</dbReference>
<dbReference type="EMBL" id="X76267">
    <property type="protein sequence ID" value="CAA53871.1"/>
    <property type="molecule type" value="Genomic_DNA"/>
</dbReference>
<dbReference type="EMBL" id="Y16780">
    <property type="protein sequence ID" value="CAB54666.1"/>
    <property type="molecule type" value="Genomic_DNA"/>
</dbReference>
<dbReference type="PIR" id="H72158">
    <property type="entry name" value="H72158"/>
</dbReference>
<dbReference type="PIR" id="T28504">
    <property type="entry name" value="T28504"/>
</dbReference>
<dbReference type="SMR" id="P0DSY4"/>
<dbReference type="KEGG" id="vg:1486432"/>
<dbReference type="Proteomes" id="UP000111493">
    <property type="component" value="Segment"/>
</dbReference>
<dbReference type="Proteomes" id="UP000119805">
    <property type="component" value="Segment"/>
</dbReference>
<dbReference type="GO" id="GO:0030430">
    <property type="term" value="C:host cell cytoplasm"/>
    <property type="evidence" value="ECO:0007669"/>
    <property type="project" value="UniProtKB-SubCell"/>
</dbReference>
<dbReference type="Gene3D" id="3.40.30.10">
    <property type="entry name" value="Glutaredoxin"/>
    <property type="match status" value="1"/>
</dbReference>
<dbReference type="InterPro" id="IPR008554">
    <property type="entry name" value="Glutaredoxin-like"/>
</dbReference>
<dbReference type="InterPro" id="IPR036249">
    <property type="entry name" value="Thioredoxin-like_sf"/>
</dbReference>
<dbReference type="Pfam" id="PF05768">
    <property type="entry name" value="Glrx-like"/>
    <property type="match status" value="1"/>
</dbReference>
<dbReference type="SUPFAM" id="SSF52833">
    <property type="entry name" value="Thioredoxin-like"/>
    <property type="match status" value="1"/>
</dbReference>
<protein>
    <recommendedName>
        <fullName>Glutaredoxin-2</fullName>
    </recommendedName>
</protein>
<name>GLRX2_VARV</name>